<dbReference type="PIR" id="C01938">
    <property type="entry name" value="KVMS40"/>
</dbReference>
<dbReference type="SMR" id="P01672"/>
<dbReference type="FunCoup" id="P01672">
    <property type="interactions" value="763"/>
</dbReference>
<dbReference type="jPOST" id="P01672"/>
<dbReference type="InParanoid" id="P01672"/>
<dbReference type="Proteomes" id="UP000000589">
    <property type="component" value="Unplaced"/>
</dbReference>
<dbReference type="RNAct" id="P01672">
    <property type="molecule type" value="protein"/>
</dbReference>
<dbReference type="GO" id="GO:0019814">
    <property type="term" value="C:immunoglobulin complex"/>
    <property type="evidence" value="ECO:0000318"/>
    <property type="project" value="GO_Central"/>
</dbReference>
<dbReference type="GO" id="GO:0002250">
    <property type="term" value="P:adaptive immune response"/>
    <property type="evidence" value="ECO:0007669"/>
    <property type="project" value="UniProtKB-KW"/>
</dbReference>
<dbReference type="GO" id="GO:0006955">
    <property type="term" value="P:immune response"/>
    <property type="evidence" value="ECO:0000318"/>
    <property type="project" value="GO_Central"/>
</dbReference>
<dbReference type="CDD" id="cd04980">
    <property type="entry name" value="IgV_L_kappa"/>
    <property type="match status" value="1"/>
</dbReference>
<dbReference type="FunFam" id="2.60.40.10:FF:000350">
    <property type="entry name" value="Immunoglobulin kappa chain variable 18-36"/>
    <property type="match status" value="1"/>
</dbReference>
<dbReference type="Gene3D" id="2.60.40.10">
    <property type="entry name" value="Immunoglobulins"/>
    <property type="match status" value="1"/>
</dbReference>
<dbReference type="InterPro" id="IPR007110">
    <property type="entry name" value="Ig-like_dom"/>
</dbReference>
<dbReference type="InterPro" id="IPR036179">
    <property type="entry name" value="Ig-like_dom_sf"/>
</dbReference>
<dbReference type="InterPro" id="IPR013783">
    <property type="entry name" value="Ig-like_fold"/>
</dbReference>
<dbReference type="InterPro" id="IPR003599">
    <property type="entry name" value="Ig_sub"/>
</dbReference>
<dbReference type="InterPro" id="IPR013106">
    <property type="entry name" value="Ig_V-set"/>
</dbReference>
<dbReference type="InterPro" id="IPR050150">
    <property type="entry name" value="IgV_Light_Chain"/>
</dbReference>
<dbReference type="PANTHER" id="PTHR23267">
    <property type="entry name" value="IMMUNOGLOBULIN LIGHT CHAIN"/>
    <property type="match status" value="1"/>
</dbReference>
<dbReference type="Pfam" id="PF07686">
    <property type="entry name" value="V-set"/>
    <property type="match status" value="1"/>
</dbReference>
<dbReference type="SMART" id="SM00409">
    <property type="entry name" value="IG"/>
    <property type="match status" value="1"/>
</dbReference>
<dbReference type="SMART" id="SM00406">
    <property type="entry name" value="IGv"/>
    <property type="match status" value="1"/>
</dbReference>
<dbReference type="SUPFAM" id="SSF48726">
    <property type="entry name" value="Immunoglobulin"/>
    <property type="match status" value="1"/>
</dbReference>
<dbReference type="PROSITE" id="PS50835">
    <property type="entry name" value="IG_LIKE"/>
    <property type="match status" value="1"/>
</dbReference>
<sequence length="111" mass="12039">DIVLTQSPASLAVSLGQRATISCRASKSVSAFGYSYMHWYQQKPGQPPKLLIYLASNLESGVPARFSGSGSGTDFTLNIHPVEEEDAVTYYCQHSRELPPTFGGGTKLEIK</sequence>
<proteinExistence type="evidence at protein level"/>
<feature type="chain" id="PRO_0000059794" description="Ig kappa chain V-III region PC 7940">
    <location>
        <begin position="1"/>
        <end position="111" status="greater than"/>
    </location>
</feature>
<feature type="region of interest" description="Framework-1">
    <location>
        <begin position="1"/>
        <end position="23"/>
    </location>
</feature>
<feature type="region of interest" description="Complementarity-determining-1">
    <location>
        <begin position="24"/>
        <end position="38"/>
    </location>
</feature>
<feature type="region of interest" description="Framework-2">
    <location>
        <begin position="39"/>
        <end position="53"/>
    </location>
</feature>
<feature type="region of interest" description="Complementarity-determining-2">
    <location>
        <begin position="54"/>
        <end position="60"/>
    </location>
</feature>
<feature type="region of interest" description="Framework-3">
    <location>
        <begin position="61"/>
        <end position="92"/>
    </location>
</feature>
<feature type="region of interest" description="Complementarity-determining-3">
    <location>
        <begin position="93"/>
        <end position="101"/>
    </location>
</feature>
<feature type="region of interest" description="Framework-4">
    <location>
        <begin position="102"/>
        <end position="111"/>
    </location>
</feature>
<feature type="disulfide bond" evidence="1">
    <location>
        <begin position="23"/>
        <end position="92"/>
    </location>
</feature>
<feature type="non-terminal residue">
    <location>
        <position position="111"/>
    </location>
</feature>
<protein>
    <recommendedName>
        <fullName>Ig kappa chain V-III region PC 7940</fullName>
    </recommendedName>
</protein>
<keyword id="KW-1064">Adaptive immunity</keyword>
<keyword id="KW-0903">Direct protein sequencing</keyword>
<keyword id="KW-1015">Disulfide bond</keyword>
<keyword id="KW-0391">Immunity</keyword>
<keyword id="KW-1280">Immunoglobulin</keyword>
<keyword id="KW-1185">Reference proteome</keyword>
<reference key="1">
    <citation type="journal article" date="1978" name="Nature">
        <title>Rearrangement of genetic information may produce immunoglobulin diversity.</title>
        <authorList>
            <person name="Weigert M."/>
            <person name="Gatmaitan L."/>
            <person name="Loh E."/>
            <person name="Schilling J."/>
            <person name="Hood L.E."/>
        </authorList>
    </citation>
    <scope>PROTEIN SEQUENCE</scope>
</reference>
<organism>
    <name type="scientific">Mus musculus</name>
    <name type="common">Mouse</name>
    <dbReference type="NCBI Taxonomy" id="10090"/>
    <lineage>
        <taxon>Eukaryota</taxon>
        <taxon>Metazoa</taxon>
        <taxon>Chordata</taxon>
        <taxon>Craniata</taxon>
        <taxon>Vertebrata</taxon>
        <taxon>Euteleostomi</taxon>
        <taxon>Mammalia</taxon>
        <taxon>Eutheria</taxon>
        <taxon>Euarchontoglires</taxon>
        <taxon>Glires</taxon>
        <taxon>Rodentia</taxon>
        <taxon>Myomorpha</taxon>
        <taxon>Muroidea</taxon>
        <taxon>Muridae</taxon>
        <taxon>Murinae</taxon>
        <taxon>Mus</taxon>
        <taxon>Mus</taxon>
    </lineage>
</organism>
<accession>P01672</accession>
<evidence type="ECO:0000255" key="1">
    <source>
        <dbReference type="PROSITE-ProRule" id="PRU00114"/>
    </source>
</evidence>
<name>KV3AK_MOUSE</name>